<protein>
    <recommendedName>
        <fullName evidence="5">Dynein axonemal assembly factor 8</fullName>
    </recommendedName>
    <alternativeName>
        <fullName evidence="5">Dynein axonemal-associated protein 1</fullName>
    </alternativeName>
    <alternativeName>
        <fullName>Uncharacterized protein C16orf71 homolog</fullName>
    </alternativeName>
</protein>
<feature type="chain" id="PRO_0000294344" description="Dynein axonemal assembly factor 8">
    <location>
        <begin position="1"/>
        <end position="361"/>
    </location>
</feature>
<feature type="region of interest" description="Disordered" evidence="4">
    <location>
        <begin position="65"/>
        <end position="191"/>
    </location>
</feature>
<feature type="region of interest" description="Disordered" evidence="4">
    <location>
        <begin position="309"/>
        <end position="334"/>
    </location>
</feature>
<feature type="compositionally biased region" description="Polar residues" evidence="4">
    <location>
        <begin position="136"/>
        <end position="157"/>
    </location>
</feature>
<feature type="compositionally biased region" description="Low complexity" evidence="4">
    <location>
        <begin position="321"/>
        <end position="334"/>
    </location>
</feature>
<feature type="modified residue" description="Phosphoserine" evidence="2">
    <location>
        <position position="142"/>
    </location>
</feature>
<feature type="modified residue" description="Phosphoserine" evidence="2">
    <location>
        <position position="144"/>
    </location>
</feature>
<proteinExistence type="evidence at transcript level"/>
<reference key="1">
    <citation type="submission" date="2006-01" db="EMBL/GenBank/DDBJ databases">
        <authorList>
            <consortium name="NIH - Mammalian Gene Collection (MGC) project"/>
        </authorList>
    </citation>
    <scope>NUCLEOTIDE SEQUENCE [LARGE SCALE MRNA]</scope>
    <source>
        <strain>Hereford</strain>
        <tissue>Testis</tissue>
    </source>
</reference>
<keyword id="KW-0963">Cytoplasm</keyword>
<keyword id="KW-0597">Phosphoprotein</keyword>
<keyword id="KW-1185">Reference proteome</keyword>
<sequence length="361" mass="38831">MASPDEDGRPSLPNPWDAILEAVKHQLPSLDSDSSASDCEDEELFIFQRNQTVLIPDLSEELADDPAGAWVTSSGSPPGLAAVPVESAMEPWGEWNAWPRPKESAPLEGRAPSKSSSLLRMSAETPPRQDDDAGGTLNTSASQSPRQGPQGEATRSPQEAGLQTEPLGAASQAQEGSDAASRKALRRERRKMIEKDILHKVTWDGRNPACPDASRGKEKACDAVEVPSEGPPGCLPVLSLQELEEWDLDQVLLSLTGREEDRGDGAPGAAWWAAGRLQGQDHTEPSTQDRLMERLSLLCARQSRETCRAQPGYGTARERVGSSSSSGHLGRRPLGLSCPPARVLSVRRLRPLEIRPGPALG</sequence>
<comment type="function">
    <text evidence="1">In cyliated cells, dynein axonemal particle-specific protein required for deployment of ODA to the axoneme. Interacts with outer dynein arm (ODA) subunits.</text>
</comment>
<comment type="subcellular location">
    <subcellularLocation>
        <location evidence="3">Dynein axonemal particle</location>
    </subcellularLocation>
    <subcellularLocation>
        <location evidence="3">Cytoplasm</location>
    </subcellularLocation>
</comment>
<accession>Q2KIS6</accession>
<organism>
    <name type="scientific">Bos taurus</name>
    <name type="common">Bovine</name>
    <dbReference type="NCBI Taxonomy" id="9913"/>
    <lineage>
        <taxon>Eukaryota</taxon>
        <taxon>Metazoa</taxon>
        <taxon>Chordata</taxon>
        <taxon>Craniata</taxon>
        <taxon>Vertebrata</taxon>
        <taxon>Euteleostomi</taxon>
        <taxon>Mammalia</taxon>
        <taxon>Eutheria</taxon>
        <taxon>Laurasiatheria</taxon>
        <taxon>Artiodactyla</taxon>
        <taxon>Ruminantia</taxon>
        <taxon>Pecora</taxon>
        <taxon>Bovidae</taxon>
        <taxon>Bovinae</taxon>
        <taxon>Bos</taxon>
    </lineage>
</organism>
<gene>
    <name type="primary">DNAAF8</name>
    <name evidence="3" type="synonym">DAAP1</name>
</gene>
<name>DAAF8_BOVIN</name>
<dbReference type="EMBL" id="BC112526">
    <property type="protein sequence ID" value="AAI12527.1"/>
    <property type="molecule type" value="mRNA"/>
</dbReference>
<dbReference type="RefSeq" id="NP_001040086.1">
    <property type="nucleotide sequence ID" value="NM_001046621.2"/>
</dbReference>
<dbReference type="FunCoup" id="Q2KIS6">
    <property type="interactions" value="72"/>
</dbReference>
<dbReference type="STRING" id="9913.ENSBTAP00000008661"/>
<dbReference type="PaxDb" id="9913-ENSBTAP00000008661"/>
<dbReference type="GeneID" id="618674"/>
<dbReference type="KEGG" id="bta:618674"/>
<dbReference type="CTD" id="146562"/>
<dbReference type="eggNOG" id="ENOG502SAQ4">
    <property type="taxonomic scope" value="Eukaryota"/>
</dbReference>
<dbReference type="InParanoid" id="Q2KIS6"/>
<dbReference type="OrthoDB" id="2162449at2759"/>
<dbReference type="Proteomes" id="UP000009136">
    <property type="component" value="Unplaced"/>
</dbReference>
<dbReference type="GO" id="GO:0005737">
    <property type="term" value="C:cytoplasm"/>
    <property type="evidence" value="ECO:0000250"/>
    <property type="project" value="UniProtKB"/>
</dbReference>
<dbReference type="GO" id="GO:0120293">
    <property type="term" value="C:dynein axonemal particle"/>
    <property type="evidence" value="ECO:0000250"/>
    <property type="project" value="UniProtKB"/>
</dbReference>
<dbReference type="GO" id="GO:0070840">
    <property type="term" value="F:dynein complex binding"/>
    <property type="evidence" value="ECO:0000250"/>
    <property type="project" value="UniProtKB"/>
</dbReference>
<dbReference type="GO" id="GO:0036158">
    <property type="term" value="P:outer dynein arm assembly"/>
    <property type="evidence" value="ECO:0000250"/>
    <property type="project" value="UniProtKB"/>
</dbReference>
<dbReference type="InterPro" id="IPR031531">
    <property type="entry name" value="DNAAF8"/>
</dbReference>
<dbReference type="PANTHER" id="PTHR35977">
    <property type="entry name" value="CHROMOSOME 16 OPEN READING FRAME 71"/>
    <property type="match status" value="1"/>
</dbReference>
<dbReference type="PANTHER" id="PTHR35977:SF1">
    <property type="entry name" value="DYNEIN AXONEMAL ASSEMBLY FACTOR 8"/>
    <property type="match status" value="1"/>
</dbReference>
<dbReference type="Pfam" id="PF15773">
    <property type="entry name" value="DAAP1"/>
    <property type="match status" value="1"/>
</dbReference>
<evidence type="ECO:0000250" key="1">
    <source>
        <dbReference type="UniProtKB" id="A0A1L8EYB2"/>
    </source>
</evidence>
<evidence type="ECO:0000250" key="2">
    <source>
        <dbReference type="UniProtKB" id="Q5XIK6"/>
    </source>
</evidence>
<evidence type="ECO:0000250" key="3">
    <source>
        <dbReference type="UniProtKB" id="Q8IYS4"/>
    </source>
</evidence>
<evidence type="ECO:0000256" key="4">
    <source>
        <dbReference type="SAM" id="MobiDB-lite"/>
    </source>
</evidence>
<evidence type="ECO:0000305" key="5"/>